<comment type="function">
    <text evidence="1">Catalyzes the transfer of a ribosyl phosphate group from 5-phosphoribose 1-diphosphate to orotate, leading to the formation of orotidine monophosphate (OMP).</text>
</comment>
<comment type="catalytic activity">
    <reaction evidence="1">
        <text>orotidine 5'-phosphate + diphosphate = orotate + 5-phospho-alpha-D-ribose 1-diphosphate</text>
        <dbReference type="Rhea" id="RHEA:10380"/>
        <dbReference type="ChEBI" id="CHEBI:30839"/>
        <dbReference type="ChEBI" id="CHEBI:33019"/>
        <dbReference type="ChEBI" id="CHEBI:57538"/>
        <dbReference type="ChEBI" id="CHEBI:58017"/>
        <dbReference type="EC" id="2.4.2.10"/>
    </reaction>
</comment>
<comment type="cofactor">
    <cofactor evidence="1">
        <name>Mg(2+)</name>
        <dbReference type="ChEBI" id="CHEBI:18420"/>
    </cofactor>
</comment>
<comment type="pathway">
    <text evidence="1">Pyrimidine metabolism; UMP biosynthesis via de novo pathway; UMP from orotate: step 1/2.</text>
</comment>
<comment type="subunit">
    <text evidence="1">Homodimer.</text>
</comment>
<comment type="similarity">
    <text evidence="1">Belongs to the purine/pyrimidine phosphoribosyltransferase family. PyrE subfamily.</text>
</comment>
<organism>
    <name type="scientific">Yersinia pseudotuberculosis serotype I (strain IP32953)</name>
    <dbReference type="NCBI Taxonomy" id="273123"/>
    <lineage>
        <taxon>Bacteria</taxon>
        <taxon>Pseudomonadati</taxon>
        <taxon>Pseudomonadota</taxon>
        <taxon>Gammaproteobacteria</taxon>
        <taxon>Enterobacterales</taxon>
        <taxon>Yersiniaceae</taxon>
        <taxon>Yersinia</taxon>
    </lineage>
</organism>
<sequence>MKAYQREFIEFALNKQVLKFGEFTLKSGRISPYFFNAGLFNTGLDLAKLGRFYAAALMDCGVEFDLLFGPAYKGIPIATTTAVALAEHHERDVPYCFNRKEAKTHGEGGNLVGSPLQGRVMLVDDVITAGTAIRESMEIINAQGATLAGVMISLDRQERGRGEISAIQEVERDYHCKVIAIVTLNDVIRYLEDKPEMAEHLVAVRQYREQYGVTL</sequence>
<name>PYRE_YERPS</name>
<keyword id="KW-0328">Glycosyltransferase</keyword>
<keyword id="KW-0460">Magnesium</keyword>
<keyword id="KW-0665">Pyrimidine biosynthesis</keyword>
<keyword id="KW-0808">Transferase</keyword>
<evidence type="ECO:0000255" key="1">
    <source>
        <dbReference type="HAMAP-Rule" id="MF_01208"/>
    </source>
</evidence>
<reference key="1">
    <citation type="journal article" date="2004" name="Proc. Natl. Acad. Sci. U.S.A.">
        <title>Insights into the evolution of Yersinia pestis through whole-genome comparison with Yersinia pseudotuberculosis.</title>
        <authorList>
            <person name="Chain P.S.G."/>
            <person name="Carniel E."/>
            <person name="Larimer F.W."/>
            <person name="Lamerdin J."/>
            <person name="Stoutland P.O."/>
            <person name="Regala W.M."/>
            <person name="Georgescu A.M."/>
            <person name="Vergez L.M."/>
            <person name="Land M.L."/>
            <person name="Motin V.L."/>
            <person name="Brubaker R.R."/>
            <person name="Fowler J."/>
            <person name="Hinnebusch J."/>
            <person name="Marceau M."/>
            <person name="Medigue C."/>
            <person name="Simonet M."/>
            <person name="Chenal-Francisque V."/>
            <person name="Souza B."/>
            <person name="Dacheux D."/>
            <person name="Elliott J.M."/>
            <person name="Derbise A."/>
            <person name="Hauser L.J."/>
            <person name="Garcia E."/>
        </authorList>
    </citation>
    <scope>NUCLEOTIDE SEQUENCE [LARGE SCALE GENOMIC DNA]</scope>
    <source>
        <strain>IP32953</strain>
    </source>
</reference>
<proteinExistence type="inferred from homology"/>
<gene>
    <name evidence="1" type="primary">pyrE</name>
    <name type="ordered locus">YPTB0042</name>
</gene>
<feature type="chain" id="PRO_1000066332" description="Orotate phosphoribosyltransferase">
    <location>
        <begin position="1"/>
        <end position="215"/>
    </location>
</feature>
<feature type="binding site" description="in other chain" evidence="1">
    <location>
        <position position="26"/>
    </location>
    <ligand>
        <name>5-phospho-alpha-D-ribose 1-diphosphate</name>
        <dbReference type="ChEBI" id="CHEBI:58017"/>
        <note>ligand shared between dimeric partners</note>
    </ligand>
</feature>
<feature type="binding site" evidence="1">
    <location>
        <begin position="34"/>
        <end position="35"/>
    </location>
    <ligand>
        <name>orotate</name>
        <dbReference type="ChEBI" id="CHEBI:30839"/>
    </ligand>
</feature>
<feature type="binding site" description="in other chain" evidence="1">
    <location>
        <begin position="72"/>
        <end position="73"/>
    </location>
    <ligand>
        <name>5-phospho-alpha-D-ribose 1-diphosphate</name>
        <dbReference type="ChEBI" id="CHEBI:58017"/>
        <note>ligand shared between dimeric partners</note>
    </ligand>
</feature>
<feature type="binding site" evidence="1">
    <location>
        <position position="99"/>
    </location>
    <ligand>
        <name>5-phospho-alpha-D-ribose 1-diphosphate</name>
        <dbReference type="ChEBI" id="CHEBI:58017"/>
        <note>ligand shared between dimeric partners</note>
    </ligand>
</feature>
<feature type="binding site" description="in other chain" evidence="1">
    <location>
        <position position="100"/>
    </location>
    <ligand>
        <name>5-phospho-alpha-D-ribose 1-diphosphate</name>
        <dbReference type="ChEBI" id="CHEBI:58017"/>
        <note>ligand shared between dimeric partners</note>
    </ligand>
</feature>
<feature type="binding site" evidence="1">
    <location>
        <position position="103"/>
    </location>
    <ligand>
        <name>5-phospho-alpha-D-ribose 1-diphosphate</name>
        <dbReference type="ChEBI" id="CHEBI:58017"/>
        <note>ligand shared between dimeric partners</note>
    </ligand>
</feature>
<feature type="binding site" evidence="1">
    <location>
        <position position="105"/>
    </location>
    <ligand>
        <name>5-phospho-alpha-D-ribose 1-diphosphate</name>
        <dbReference type="ChEBI" id="CHEBI:58017"/>
        <note>ligand shared between dimeric partners</note>
    </ligand>
</feature>
<feature type="binding site" description="in other chain" evidence="1">
    <location>
        <begin position="124"/>
        <end position="132"/>
    </location>
    <ligand>
        <name>5-phospho-alpha-D-ribose 1-diphosphate</name>
        <dbReference type="ChEBI" id="CHEBI:58017"/>
        <note>ligand shared between dimeric partners</note>
    </ligand>
</feature>
<feature type="binding site" evidence="1">
    <location>
        <position position="128"/>
    </location>
    <ligand>
        <name>orotate</name>
        <dbReference type="ChEBI" id="CHEBI:30839"/>
    </ligand>
</feature>
<feature type="binding site" evidence="1">
    <location>
        <position position="156"/>
    </location>
    <ligand>
        <name>orotate</name>
        <dbReference type="ChEBI" id="CHEBI:30839"/>
    </ligand>
</feature>
<dbReference type="EC" id="2.4.2.10" evidence="1"/>
<dbReference type="EMBL" id="BX936398">
    <property type="protein sequence ID" value="CAH19282.1"/>
    <property type="molecule type" value="Genomic_DNA"/>
</dbReference>
<dbReference type="RefSeq" id="WP_002208996.1">
    <property type="nucleotide sequence ID" value="NZ_CP009712.1"/>
</dbReference>
<dbReference type="SMR" id="Q66GE0"/>
<dbReference type="GeneID" id="57974545"/>
<dbReference type="KEGG" id="ypo:BZ17_2553"/>
<dbReference type="KEGG" id="yps:YPTB0042"/>
<dbReference type="PATRIC" id="fig|273123.14.peg.2678"/>
<dbReference type="UniPathway" id="UPA00070">
    <property type="reaction ID" value="UER00119"/>
</dbReference>
<dbReference type="Proteomes" id="UP000001011">
    <property type="component" value="Chromosome"/>
</dbReference>
<dbReference type="GO" id="GO:0005737">
    <property type="term" value="C:cytoplasm"/>
    <property type="evidence" value="ECO:0007669"/>
    <property type="project" value="TreeGrafter"/>
</dbReference>
<dbReference type="GO" id="GO:0000287">
    <property type="term" value="F:magnesium ion binding"/>
    <property type="evidence" value="ECO:0007669"/>
    <property type="project" value="UniProtKB-UniRule"/>
</dbReference>
<dbReference type="GO" id="GO:0004588">
    <property type="term" value="F:orotate phosphoribosyltransferase activity"/>
    <property type="evidence" value="ECO:0007669"/>
    <property type="project" value="UniProtKB-UniRule"/>
</dbReference>
<dbReference type="GO" id="GO:0006207">
    <property type="term" value="P:'de novo' pyrimidine nucleobase biosynthetic process"/>
    <property type="evidence" value="ECO:0007669"/>
    <property type="project" value="TreeGrafter"/>
</dbReference>
<dbReference type="GO" id="GO:0044205">
    <property type="term" value="P:'de novo' UMP biosynthetic process"/>
    <property type="evidence" value="ECO:0007669"/>
    <property type="project" value="UniProtKB-UniRule"/>
</dbReference>
<dbReference type="GO" id="GO:0046132">
    <property type="term" value="P:pyrimidine ribonucleoside biosynthetic process"/>
    <property type="evidence" value="ECO:0007669"/>
    <property type="project" value="TreeGrafter"/>
</dbReference>
<dbReference type="CDD" id="cd06223">
    <property type="entry name" value="PRTases_typeI"/>
    <property type="match status" value="1"/>
</dbReference>
<dbReference type="FunFam" id="3.40.50.2020:FF:000008">
    <property type="entry name" value="Orotate phosphoribosyltransferase"/>
    <property type="match status" value="1"/>
</dbReference>
<dbReference type="Gene3D" id="3.40.50.2020">
    <property type="match status" value="1"/>
</dbReference>
<dbReference type="HAMAP" id="MF_01208">
    <property type="entry name" value="PyrE"/>
    <property type="match status" value="1"/>
</dbReference>
<dbReference type="InterPro" id="IPR023031">
    <property type="entry name" value="OPRT"/>
</dbReference>
<dbReference type="InterPro" id="IPR004467">
    <property type="entry name" value="Or_phspho_trans_dom"/>
</dbReference>
<dbReference type="InterPro" id="IPR000836">
    <property type="entry name" value="PRibTrfase_dom"/>
</dbReference>
<dbReference type="InterPro" id="IPR029057">
    <property type="entry name" value="PRTase-like"/>
</dbReference>
<dbReference type="NCBIfam" id="TIGR00336">
    <property type="entry name" value="pyrE"/>
    <property type="match status" value="1"/>
</dbReference>
<dbReference type="PANTHER" id="PTHR46683">
    <property type="entry name" value="OROTATE PHOSPHORIBOSYLTRANSFERASE 1-RELATED"/>
    <property type="match status" value="1"/>
</dbReference>
<dbReference type="PANTHER" id="PTHR46683:SF1">
    <property type="entry name" value="OROTATE PHOSPHORIBOSYLTRANSFERASE 1-RELATED"/>
    <property type="match status" value="1"/>
</dbReference>
<dbReference type="Pfam" id="PF00156">
    <property type="entry name" value="Pribosyltran"/>
    <property type="match status" value="1"/>
</dbReference>
<dbReference type="SUPFAM" id="SSF53271">
    <property type="entry name" value="PRTase-like"/>
    <property type="match status" value="1"/>
</dbReference>
<dbReference type="PROSITE" id="PS00103">
    <property type="entry name" value="PUR_PYR_PR_TRANSFER"/>
    <property type="match status" value="1"/>
</dbReference>
<protein>
    <recommendedName>
        <fullName evidence="1">Orotate phosphoribosyltransferase</fullName>
        <shortName evidence="1">OPRT</shortName>
        <shortName evidence="1">OPRTase</shortName>
        <ecNumber evidence="1">2.4.2.10</ecNumber>
    </recommendedName>
</protein>
<accession>Q66GE0</accession>